<sequence>MSQTPSSLCDLEHHSAFVERHIGPNDAEIAQMLEVVGHASLDALTDAIVPGNIKSPAPLALPEAITEEEALVKIRAIADKNTVYRNFIGQGYYGTHTPKVILRNILENPAWYTAYTPYQAEISQGRMEALINFQTLCADLTGMQIANASLLDEATAAAEAMTLAKRSAKSRSDIFFVHDAVHPQTLELLRTRAEPLDIMLRVGTPEEALQAECFGVLLQYPDSFGHIGDHAALADAVHAQGGLVAVATDLLALTLIAAPGQWGADIVVGNSQRFGVPFGFGGPHAAFMACRDAYKRSMPGRLIGVSIDAAGNPAYRLTLQTREQHIRREKATSNICTAQVLLAVMASMYAVYHGPDGLTRIARRTHRLAAILAAALRGAGVTVGEHFFDTLHVKAIDADAIHARARAAGINLRAIDSEAVGISLDETTTRADVVALAQLFGAMADVDALDAATADALPQGLLRSSAFLTHPVFNTHHSEHELLRYMRSLADKDLAMDRTMIPLGSCTMKLNATAEMIPVTWPEFGAIHPLAPAEQSAGYAQLIDELEAMLVECTGYDAVSLQPNSGAQGEYAGLLAIRAYHRSRGEAHRDICLIPESAHGTNPASAQMCGMTVVVTKCDANGNVDVDDIRAKAEKYSDRLAALMITYPSTHGVFEEDVVAICEAVHAHGGQVYTDGANMNALVGVAKPGKWGSDVSHLNLHKTFCIPHGGGGPGVGPCAVKSHLAPFLPRAGLHAGEGQTAAIHGGGFNSGSGSGHSSRIGGMVSAAAYGSASILPISWMYVTMMGSAGLRKATQVALLNANYIAKRLAPHYKTLYTGRNGLVAHECILDVRPLEKTSGIGAEDIAKRLIDFGFHAPTLSFPVAGTLMVEPTESESQHELDRFIDAMIQIREEIRAIEDGRLDREDNPLKHAPHTATQVSASEWTHAYPRELAAFPLPSLKQQKYWPPVARVDNVYGDKNVMCACIPVDAYKIPVDAYKEDAEA</sequence>
<proteinExistence type="inferred from homology"/>
<name>GCSP_XANOM</name>
<evidence type="ECO:0000255" key="1">
    <source>
        <dbReference type="HAMAP-Rule" id="MF_00711"/>
    </source>
</evidence>
<dbReference type="EC" id="1.4.4.2" evidence="1"/>
<dbReference type="EMBL" id="AP008229">
    <property type="protein sequence ID" value="BAE70106.1"/>
    <property type="molecule type" value="Genomic_DNA"/>
</dbReference>
<dbReference type="SMR" id="Q2P021"/>
<dbReference type="KEGG" id="xom:XOO3351"/>
<dbReference type="HOGENOM" id="CLU_004620_3_2_6"/>
<dbReference type="GO" id="GO:0005829">
    <property type="term" value="C:cytosol"/>
    <property type="evidence" value="ECO:0007669"/>
    <property type="project" value="TreeGrafter"/>
</dbReference>
<dbReference type="GO" id="GO:0005960">
    <property type="term" value="C:glycine cleavage complex"/>
    <property type="evidence" value="ECO:0007669"/>
    <property type="project" value="TreeGrafter"/>
</dbReference>
<dbReference type="GO" id="GO:0016594">
    <property type="term" value="F:glycine binding"/>
    <property type="evidence" value="ECO:0007669"/>
    <property type="project" value="TreeGrafter"/>
</dbReference>
<dbReference type="GO" id="GO:0004375">
    <property type="term" value="F:glycine dehydrogenase (decarboxylating) activity"/>
    <property type="evidence" value="ECO:0007669"/>
    <property type="project" value="UniProtKB-EC"/>
</dbReference>
<dbReference type="GO" id="GO:0030170">
    <property type="term" value="F:pyridoxal phosphate binding"/>
    <property type="evidence" value="ECO:0007669"/>
    <property type="project" value="TreeGrafter"/>
</dbReference>
<dbReference type="GO" id="GO:0019464">
    <property type="term" value="P:glycine decarboxylation via glycine cleavage system"/>
    <property type="evidence" value="ECO:0007669"/>
    <property type="project" value="UniProtKB-UniRule"/>
</dbReference>
<dbReference type="CDD" id="cd00613">
    <property type="entry name" value="GDC-P"/>
    <property type="match status" value="2"/>
</dbReference>
<dbReference type="FunFam" id="3.40.640.10:FF:000005">
    <property type="entry name" value="Glycine dehydrogenase (decarboxylating), mitochondrial"/>
    <property type="match status" value="1"/>
</dbReference>
<dbReference type="FunFam" id="3.90.1150.10:FF:000007">
    <property type="entry name" value="Glycine dehydrogenase (decarboxylating), mitochondrial"/>
    <property type="match status" value="1"/>
</dbReference>
<dbReference type="FunFam" id="3.40.640.10:FF:000007">
    <property type="entry name" value="glycine dehydrogenase (Decarboxylating), mitochondrial"/>
    <property type="match status" value="1"/>
</dbReference>
<dbReference type="Gene3D" id="3.90.1150.10">
    <property type="entry name" value="Aspartate Aminotransferase, domain 1"/>
    <property type="match status" value="2"/>
</dbReference>
<dbReference type="Gene3D" id="3.40.640.10">
    <property type="entry name" value="Type I PLP-dependent aspartate aminotransferase-like (Major domain)"/>
    <property type="match status" value="2"/>
</dbReference>
<dbReference type="HAMAP" id="MF_00711">
    <property type="entry name" value="GcvP"/>
    <property type="match status" value="1"/>
</dbReference>
<dbReference type="InterPro" id="IPR003437">
    <property type="entry name" value="GcvP"/>
</dbReference>
<dbReference type="InterPro" id="IPR049316">
    <property type="entry name" value="GDC-P_C"/>
</dbReference>
<dbReference type="InterPro" id="IPR049315">
    <property type="entry name" value="GDC-P_N"/>
</dbReference>
<dbReference type="InterPro" id="IPR020581">
    <property type="entry name" value="GDC_P"/>
</dbReference>
<dbReference type="InterPro" id="IPR015424">
    <property type="entry name" value="PyrdxlP-dep_Trfase"/>
</dbReference>
<dbReference type="InterPro" id="IPR015421">
    <property type="entry name" value="PyrdxlP-dep_Trfase_major"/>
</dbReference>
<dbReference type="InterPro" id="IPR015422">
    <property type="entry name" value="PyrdxlP-dep_Trfase_small"/>
</dbReference>
<dbReference type="NCBIfam" id="TIGR00461">
    <property type="entry name" value="gcvP"/>
    <property type="match status" value="1"/>
</dbReference>
<dbReference type="NCBIfam" id="NF003346">
    <property type="entry name" value="PRK04366.1"/>
    <property type="match status" value="1"/>
</dbReference>
<dbReference type="PANTHER" id="PTHR11773:SF1">
    <property type="entry name" value="GLYCINE DEHYDROGENASE (DECARBOXYLATING), MITOCHONDRIAL"/>
    <property type="match status" value="1"/>
</dbReference>
<dbReference type="PANTHER" id="PTHR11773">
    <property type="entry name" value="GLYCINE DEHYDROGENASE, DECARBOXYLATING"/>
    <property type="match status" value="1"/>
</dbReference>
<dbReference type="Pfam" id="PF21478">
    <property type="entry name" value="GcvP2_C"/>
    <property type="match status" value="1"/>
</dbReference>
<dbReference type="Pfam" id="PF02347">
    <property type="entry name" value="GDC-P"/>
    <property type="match status" value="2"/>
</dbReference>
<dbReference type="SUPFAM" id="SSF53383">
    <property type="entry name" value="PLP-dependent transferases"/>
    <property type="match status" value="2"/>
</dbReference>
<feature type="chain" id="PRO_1000045628" description="Glycine dehydrogenase (decarboxylating)">
    <location>
        <begin position="1"/>
        <end position="984"/>
    </location>
</feature>
<feature type="modified residue" description="N6-(pyridoxal phosphate)lysine" evidence="1">
    <location>
        <position position="702"/>
    </location>
</feature>
<organism>
    <name type="scientific">Xanthomonas oryzae pv. oryzae (strain MAFF 311018)</name>
    <dbReference type="NCBI Taxonomy" id="342109"/>
    <lineage>
        <taxon>Bacteria</taxon>
        <taxon>Pseudomonadati</taxon>
        <taxon>Pseudomonadota</taxon>
        <taxon>Gammaproteobacteria</taxon>
        <taxon>Lysobacterales</taxon>
        <taxon>Lysobacteraceae</taxon>
        <taxon>Xanthomonas</taxon>
    </lineage>
</organism>
<reference key="1">
    <citation type="journal article" date="2005" name="Jpn. Agric. Res. Q.">
        <title>Genome sequence of Xanthomonas oryzae pv. oryzae suggests contribution of large numbers of effector genes and insertion sequences to its race diversity.</title>
        <authorList>
            <person name="Ochiai H."/>
            <person name="Inoue Y."/>
            <person name="Takeya M."/>
            <person name="Sasaki A."/>
            <person name="Kaku H."/>
        </authorList>
    </citation>
    <scope>NUCLEOTIDE SEQUENCE [LARGE SCALE GENOMIC DNA]</scope>
    <source>
        <strain>MAFF 311018</strain>
    </source>
</reference>
<protein>
    <recommendedName>
        <fullName evidence="1">Glycine dehydrogenase (decarboxylating)</fullName>
        <ecNumber evidence="1">1.4.4.2</ecNumber>
    </recommendedName>
    <alternativeName>
        <fullName evidence="1">Glycine cleavage system P-protein</fullName>
    </alternativeName>
    <alternativeName>
        <fullName evidence="1">Glycine decarboxylase</fullName>
    </alternativeName>
    <alternativeName>
        <fullName evidence="1">Glycine dehydrogenase (aminomethyl-transferring)</fullName>
    </alternativeName>
</protein>
<comment type="function">
    <text evidence="1">The glycine cleavage system catalyzes the degradation of glycine. The P protein binds the alpha-amino group of glycine through its pyridoxal phosphate cofactor; CO(2) is released and the remaining methylamine moiety is then transferred to the lipoamide cofactor of the H protein.</text>
</comment>
<comment type="catalytic activity">
    <reaction evidence="1">
        <text>N(6)-[(R)-lipoyl]-L-lysyl-[glycine-cleavage complex H protein] + glycine + H(+) = N(6)-[(R)-S(8)-aminomethyldihydrolipoyl]-L-lysyl-[glycine-cleavage complex H protein] + CO2</text>
        <dbReference type="Rhea" id="RHEA:24304"/>
        <dbReference type="Rhea" id="RHEA-COMP:10494"/>
        <dbReference type="Rhea" id="RHEA-COMP:10495"/>
        <dbReference type="ChEBI" id="CHEBI:15378"/>
        <dbReference type="ChEBI" id="CHEBI:16526"/>
        <dbReference type="ChEBI" id="CHEBI:57305"/>
        <dbReference type="ChEBI" id="CHEBI:83099"/>
        <dbReference type="ChEBI" id="CHEBI:83143"/>
        <dbReference type="EC" id="1.4.4.2"/>
    </reaction>
</comment>
<comment type="cofactor">
    <cofactor evidence="1">
        <name>pyridoxal 5'-phosphate</name>
        <dbReference type="ChEBI" id="CHEBI:597326"/>
    </cofactor>
</comment>
<comment type="subunit">
    <text evidence="1">The glycine cleavage system is composed of four proteins: P, T, L and H.</text>
</comment>
<comment type="similarity">
    <text evidence="1">Belongs to the GcvP family.</text>
</comment>
<gene>
    <name evidence="1" type="primary">gcvP</name>
    <name type="ordered locus">XOO3351</name>
</gene>
<keyword id="KW-0560">Oxidoreductase</keyword>
<keyword id="KW-0663">Pyridoxal phosphate</keyword>
<accession>Q2P021</accession>